<dbReference type="EC" id="2.8.4.3" evidence="1"/>
<dbReference type="EMBL" id="CP000872">
    <property type="protein sequence ID" value="ABX63178.1"/>
    <property type="molecule type" value="Genomic_DNA"/>
</dbReference>
<dbReference type="RefSeq" id="WP_004691178.1">
    <property type="nucleotide sequence ID" value="NC_010103.1"/>
</dbReference>
<dbReference type="SMR" id="A9M9Y3"/>
<dbReference type="GeneID" id="97534593"/>
<dbReference type="KEGG" id="bcs:BCAN_A2196"/>
<dbReference type="HOGENOM" id="CLU_018697_2_0_5"/>
<dbReference type="PhylomeDB" id="A9M9Y3"/>
<dbReference type="Proteomes" id="UP000001385">
    <property type="component" value="Chromosome I"/>
</dbReference>
<dbReference type="GO" id="GO:0005829">
    <property type="term" value="C:cytosol"/>
    <property type="evidence" value="ECO:0007669"/>
    <property type="project" value="TreeGrafter"/>
</dbReference>
<dbReference type="GO" id="GO:0051539">
    <property type="term" value="F:4 iron, 4 sulfur cluster binding"/>
    <property type="evidence" value="ECO:0007669"/>
    <property type="project" value="UniProtKB-UniRule"/>
</dbReference>
<dbReference type="GO" id="GO:0046872">
    <property type="term" value="F:metal ion binding"/>
    <property type="evidence" value="ECO:0007669"/>
    <property type="project" value="UniProtKB-KW"/>
</dbReference>
<dbReference type="GO" id="GO:0035597">
    <property type="term" value="F:N6-isopentenyladenosine methylthiotransferase activity"/>
    <property type="evidence" value="ECO:0007669"/>
    <property type="project" value="TreeGrafter"/>
</dbReference>
<dbReference type="CDD" id="cd01335">
    <property type="entry name" value="Radical_SAM"/>
    <property type="match status" value="1"/>
</dbReference>
<dbReference type="FunFam" id="3.40.50.12160:FF:000003">
    <property type="entry name" value="CDK5 regulatory subunit-associated protein 1"/>
    <property type="match status" value="1"/>
</dbReference>
<dbReference type="FunFam" id="3.80.30.20:FF:000001">
    <property type="entry name" value="tRNA-2-methylthio-N(6)-dimethylallyladenosine synthase 2"/>
    <property type="match status" value="1"/>
</dbReference>
<dbReference type="Gene3D" id="3.40.50.12160">
    <property type="entry name" value="Methylthiotransferase, N-terminal domain"/>
    <property type="match status" value="1"/>
</dbReference>
<dbReference type="Gene3D" id="3.80.30.20">
    <property type="entry name" value="tm_1862 like domain"/>
    <property type="match status" value="1"/>
</dbReference>
<dbReference type="HAMAP" id="MF_01864">
    <property type="entry name" value="tRNA_metthiotr_MiaB"/>
    <property type="match status" value="1"/>
</dbReference>
<dbReference type="InterPro" id="IPR006638">
    <property type="entry name" value="Elp3/MiaA/NifB-like_rSAM"/>
</dbReference>
<dbReference type="InterPro" id="IPR005839">
    <property type="entry name" value="Methylthiotransferase"/>
</dbReference>
<dbReference type="InterPro" id="IPR020612">
    <property type="entry name" value="Methylthiotransferase_CS"/>
</dbReference>
<dbReference type="InterPro" id="IPR013848">
    <property type="entry name" value="Methylthiotransferase_N"/>
</dbReference>
<dbReference type="InterPro" id="IPR038135">
    <property type="entry name" value="Methylthiotransferase_N_sf"/>
</dbReference>
<dbReference type="InterPro" id="IPR006463">
    <property type="entry name" value="MiaB_methiolase"/>
</dbReference>
<dbReference type="InterPro" id="IPR007197">
    <property type="entry name" value="rSAM"/>
</dbReference>
<dbReference type="InterPro" id="IPR023404">
    <property type="entry name" value="rSAM_horseshoe"/>
</dbReference>
<dbReference type="InterPro" id="IPR002792">
    <property type="entry name" value="TRAM_dom"/>
</dbReference>
<dbReference type="NCBIfam" id="TIGR01574">
    <property type="entry name" value="miaB-methiolase"/>
    <property type="match status" value="1"/>
</dbReference>
<dbReference type="NCBIfam" id="TIGR00089">
    <property type="entry name" value="MiaB/RimO family radical SAM methylthiotransferase"/>
    <property type="match status" value="1"/>
</dbReference>
<dbReference type="PANTHER" id="PTHR43020">
    <property type="entry name" value="CDK5 REGULATORY SUBUNIT-ASSOCIATED PROTEIN 1"/>
    <property type="match status" value="1"/>
</dbReference>
<dbReference type="PANTHER" id="PTHR43020:SF2">
    <property type="entry name" value="MITOCHONDRIAL TRNA METHYLTHIOTRANSFERASE CDK5RAP1"/>
    <property type="match status" value="1"/>
</dbReference>
<dbReference type="Pfam" id="PF04055">
    <property type="entry name" value="Radical_SAM"/>
    <property type="match status" value="1"/>
</dbReference>
<dbReference type="Pfam" id="PF01938">
    <property type="entry name" value="TRAM"/>
    <property type="match status" value="1"/>
</dbReference>
<dbReference type="Pfam" id="PF00919">
    <property type="entry name" value="UPF0004"/>
    <property type="match status" value="1"/>
</dbReference>
<dbReference type="SFLD" id="SFLDF00273">
    <property type="entry name" value="(dimethylallyl)adenosine_tRNA"/>
    <property type="match status" value="1"/>
</dbReference>
<dbReference type="SFLD" id="SFLDG01082">
    <property type="entry name" value="B12-binding_domain_containing"/>
    <property type="match status" value="1"/>
</dbReference>
<dbReference type="SFLD" id="SFLDG01061">
    <property type="entry name" value="methylthiotransferase"/>
    <property type="match status" value="1"/>
</dbReference>
<dbReference type="SMART" id="SM00729">
    <property type="entry name" value="Elp3"/>
    <property type="match status" value="1"/>
</dbReference>
<dbReference type="SUPFAM" id="SSF102114">
    <property type="entry name" value="Radical SAM enzymes"/>
    <property type="match status" value="1"/>
</dbReference>
<dbReference type="PROSITE" id="PS51449">
    <property type="entry name" value="MTTASE_N"/>
    <property type="match status" value="1"/>
</dbReference>
<dbReference type="PROSITE" id="PS01278">
    <property type="entry name" value="MTTASE_RADICAL"/>
    <property type="match status" value="1"/>
</dbReference>
<dbReference type="PROSITE" id="PS51918">
    <property type="entry name" value="RADICAL_SAM"/>
    <property type="match status" value="1"/>
</dbReference>
<dbReference type="PROSITE" id="PS50926">
    <property type="entry name" value="TRAM"/>
    <property type="match status" value="1"/>
</dbReference>
<organism>
    <name type="scientific">Brucella canis (strain ATCC 23365 / NCTC 10854 / RM-666)</name>
    <dbReference type="NCBI Taxonomy" id="483179"/>
    <lineage>
        <taxon>Bacteria</taxon>
        <taxon>Pseudomonadati</taxon>
        <taxon>Pseudomonadota</taxon>
        <taxon>Alphaproteobacteria</taxon>
        <taxon>Hyphomicrobiales</taxon>
        <taxon>Brucellaceae</taxon>
        <taxon>Brucella/Ochrobactrum group</taxon>
        <taxon>Brucella</taxon>
    </lineage>
</organism>
<reference key="1">
    <citation type="submission" date="2007-10" db="EMBL/GenBank/DDBJ databases">
        <title>Brucella canis ATCC 23365 whole genome shotgun sequencing project.</title>
        <authorList>
            <person name="Setubal J.C."/>
            <person name="Bowns C."/>
            <person name="Boyle S."/>
            <person name="Crasta O.R."/>
            <person name="Czar M.J."/>
            <person name="Dharmanolla C."/>
            <person name="Gillespie J.J."/>
            <person name="Kenyon R.W."/>
            <person name="Lu J."/>
            <person name="Mane S."/>
            <person name="Mohapatra S."/>
            <person name="Nagrani S."/>
            <person name="Purkayastha A."/>
            <person name="Rajasimha H.K."/>
            <person name="Shallom J.M."/>
            <person name="Shallom S."/>
            <person name="Shukla M."/>
            <person name="Snyder E.E."/>
            <person name="Sobral B.W."/>
            <person name="Wattam A.R."/>
            <person name="Will R."/>
            <person name="Williams K."/>
            <person name="Yoo H."/>
            <person name="Bruce D."/>
            <person name="Detter C."/>
            <person name="Munk C."/>
            <person name="Brettin T.S."/>
        </authorList>
    </citation>
    <scope>NUCLEOTIDE SEQUENCE [LARGE SCALE GENOMIC DNA]</scope>
    <source>
        <strain>ATCC 23365 / NCTC 10854 / RM-666</strain>
    </source>
</reference>
<feature type="chain" id="PRO_0000374166" description="tRNA-2-methylthio-N(6)-dimethylallyladenosine synthase">
    <location>
        <begin position="1"/>
        <end position="467"/>
    </location>
</feature>
<feature type="domain" description="MTTase N-terminal" evidence="1">
    <location>
        <begin position="23"/>
        <end position="143"/>
    </location>
</feature>
<feature type="domain" description="Radical SAM core" evidence="2">
    <location>
        <begin position="170"/>
        <end position="402"/>
    </location>
</feature>
<feature type="domain" description="TRAM" evidence="1">
    <location>
        <begin position="405"/>
        <end position="467"/>
    </location>
</feature>
<feature type="region of interest" description="Disordered" evidence="3">
    <location>
        <begin position="1"/>
        <end position="20"/>
    </location>
</feature>
<feature type="binding site" evidence="1">
    <location>
        <position position="32"/>
    </location>
    <ligand>
        <name>[4Fe-4S] cluster</name>
        <dbReference type="ChEBI" id="CHEBI:49883"/>
        <label>1</label>
    </ligand>
</feature>
<feature type="binding site" evidence="1">
    <location>
        <position position="68"/>
    </location>
    <ligand>
        <name>[4Fe-4S] cluster</name>
        <dbReference type="ChEBI" id="CHEBI:49883"/>
        <label>1</label>
    </ligand>
</feature>
<feature type="binding site" evidence="1">
    <location>
        <position position="106"/>
    </location>
    <ligand>
        <name>[4Fe-4S] cluster</name>
        <dbReference type="ChEBI" id="CHEBI:49883"/>
        <label>1</label>
    </ligand>
</feature>
<feature type="binding site" evidence="1">
    <location>
        <position position="184"/>
    </location>
    <ligand>
        <name>[4Fe-4S] cluster</name>
        <dbReference type="ChEBI" id="CHEBI:49883"/>
        <label>2</label>
        <note>4Fe-4S-S-AdoMet</note>
    </ligand>
</feature>
<feature type="binding site" evidence="1">
    <location>
        <position position="188"/>
    </location>
    <ligand>
        <name>[4Fe-4S] cluster</name>
        <dbReference type="ChEBI" id="CHEBI:49883"/>
        <label>2</label>
        <note>4Fe-4S-S-AdoMet</note>
    </ligand>
</feature>
<feature type="binding site" evidence="1">
    <location>
        <position position="191"/>
    </location>
    <ligand>
        <name>[4Fe-4S] cluster</name>
        <dbReference type="ChEBI" id="CHEBI:49883"/>
        <label>2</label>
        <note>4Fe-4S-S-AdoMet</note>
    </ligand>
</feature>
<keyword id="KW-0004">4Fe-4S</keyword>
<keyword id="KW-0963">Cytoplasm</keyword>
<keyword id="KW-0408">Iron</keyword>
<keyword id="KW-0411">Iron-sulfur</keyword>
<keyword id="KW-0479">Metal-binding</keyword>
<keyword id="KW-1185">Reference proteome</keyword>
<keyword id="KW-0949">S-adenosyl-L-methionine</keyword>
<keyword id="KW-0808">Transferase</keyword>
<keyword id="KW-0819">tRNA processing</keyword>
<name>MIAB_BRUC2</name>
<accession>A9M9Y3</accession>
<comment type="function">
    <text evidence="1">Catalyzes the methylthiolation of N6-(dimethylallyl)adenosine (i(6)A), leading to the formation of 2-methylthio-N6-(dimethylallyl)adenosine (ms(2)i(6)A) at position 37 in tRNAs that read codons beginning with uridine.</text>
</comment>
<comment type="catalytic activity">
    <reaction evidence="1">
        <text>N(6)-dimethylallyladenosine(37) in tRNA + (sulfur carrier)-SH + AH2 + 2 S-adenosyl-L-methionine = 2-methylsulfanyl-N(6)-dimethylallyladenosine(37) in tRNA + (sulfur carrier)-H + 5'-deoxyadenosine + L-methionine + A + S-adenosyl-L-homocysteine + 2 H(+)</text>
        <dbReference type="Rhea" id="RHEA:37067"/>
        <dbReference type="Rhea" id="RHEA-COMP:10375"/>
        <dbReference type="Rhea" id="RHEA-COMP:10376"/>
        <dbReference type="Rhea" id="RHEA-COMP:14737"/>
        <dbReference type="Rhea" id="RHEA-COMP:14739"/>
        <dbReference type="ChEBI" id="CHEBI:13193"/>
        <dbReference type="ChEBI" id="CHEBI:15378"/>
        <dbReference type="ChEBI" id="CHEBI:17319"/>
        <dbReference type="ChEBI" id="CHEBI:17499"/>
        <dbReference type="ChEBI" id="CHEBI:29917"/>
        <dbReference type="ChEBI" id="CHEBI:57844"/>
        <dbReference type="ChEBI" id="CHEBI:57856"/>
        <dbReference type="ChEBI" id="CHEBI:59789"/>
        <dbReference type="ChEBI" id="CHEBI:64428"/>
        <dbReference type="ChEBI" id="CHEBI:74415"/>
        <dbReference type="ChEBI" id="CHEBI:74417"/>
        <dbReference type="EC" id="2.8.4.3"/>
    </reaction>
</comment>
<comment type="cofactor">
    <cofactor evidence="1">
        <name>[4Fe-4S] cluster</name>
        <dbReference type="ChEBI" id="CHEBI:49883"/>
    </cofactor>
    <text evidence="1">Binds 2 [4Fe-4S] clusters. One cluster is coordinated with 3 cysteines and an exchangeable S-adenosyl-L-methionine.</text>
</comment>
<comment type="subunit">
    <text evidence="1">Monomer.</text>
</comment>
<comment type="subcellular location">
    <subcellularLocation>
        <location evidence="1">Cytoplasm</location>
    </subcellularLocation>
</comment>
<comment type="similarity">
    <text evidence="1">Belongs to the methylthiotransferase family. MiaB subfamily.</text>
</comment>
<evidence type="ECO:0000255" key="1">
    <source>
        <dbReference type="HAMAP-Rule" id="MF_01864"/>
    </source>
</evidence>
<evidence type="ECO:0000255" key="2">
    <source>
        <dbReference type="PROSITE-ProRule" id="PRU01266"/>
    </source>
</evidence>
<evidence type="ECO:0000256" key="3">
    <source>
        <dbReference type="SAM" id="MobiDB-lite"/>
    </source>
</evidence>
<protein>
    <recommendedName>
        <fullName evidence="1">tRNA-2-methylthio-N(6)-dimethylallyladenosine synthase</fullName>
        <ecNumber evidence="1">2.8.4.3</ecNumber>
    </recommendedName>
    <alternativeName>
        <fullName evidence="1">(Dimethylallyl)adenosine tRNA methylthiotransferase MiaB</fullName>
    </alternativeName>
    <alternativeName>
        <fullName evidence="1">tRNA-i(6)A37 methylthiotransferase</fullName>
    </alternativeName>
</protein>
<gene>
    <name evidence="1" type="primary">miaB</name>
    <name type="ordered locus">BCAN_A2196</name>
</gene>
<proteinExistence type="inferred from homology"/>
<sequence length="467" mass="52309">MSDDTTQIEPAMAQETSPRANTRKVFVKTYGCQMNVYDSQRMADSLAAEGYVATDTPDDADLVLLNTCHIREKASEKLYSALGRLRKMKDARAADGKELTIGVAGCVAQAEGQEILRRAPNVDLVIGPQTYHRLPNALARVRGGEKVVETDYAIEDKFEHLPAPRREETRKRGVSAFLTVQEGCDKFCTFCVVPYTRGSEVSRSVKQIVAEAERLADSGVRELTLLGQNVNAWHGEGEDGREWGLGELLFRLARIPGIARLRYTTSHPRDMDDSLIAAHRDLRQLMPYLHLPVQSGSDRILKAMNRRHKADEYLRLIERIRNVRPDMALSGDFIVGFPGETDQDFEDTMQLVRDVNYAQAYSFKYSPRPGTPGADLDDHVEEAVKDERLQRLQALLSAQQYAFQDSMIGRKMDVLLEKPGREAGQMVGRSPWLLPVIIDDNKDRVGDIIHVKIVSTGTNSLIAQKLA</sequence>